<reference key="1">
    <citation type="submission" date="2004-12" db="EMBL/GenBank/DDBJ databases">
        <title>The genome sequence of Borrelia hermsii and Borrelia turicatae: comparative analysis of two agents of endemic N. America relapsing fever.</title>
        <authorList>
            <person name="Porcella S.F."/>
            <person name="Raffel S.J."/>
            <person name="Schrumpf M.E."/>
            <person name="Montgomery B."/>
            <person name="Smith T."/>
            <person name="Schwan T.G."/>
        </authorList>
    </citation>
    <scope>NUCLEOTIDE SEQUENCE [LARGE SCALE GENOMIC DNA]</scope>
    <source>
        <strain>91E135</strain>
    </source>
</reference>
<gene>
    <name evidence="1" type="primary">ruvA</name>
    <name type="ordered locus">BT0023</name>
</gene>
<evidence type="ECO:0000255" key="1">
    <source>
        <dbReference type="HAMAP-Rule" id="MF_00031"/>
    </source>
</evidence>
<keyword id="KW-0963">Cytoplasm</keyword>
<keyword id="KW-0227">DNA damage</keyword>
<keyword id="KW-0233">DNA recombination</keyword>
<keyword id="KW-0234">DNA repair</keyword>
<keyword id="KW-0238">DNA-binding</keyword>
<keyword id="KW-1185">Reference proteome</keyword>
<organism>
    <name type="scientific">Borrelia turicatae (strain 91E135)</name>
    <dbReference type="NCBI Taxonomy" id="314724"/>
    <lineage>
        <taxon>Bacteria</taxon>
        <taxon>Pseudomonadati</taxon>
        <taxon>Spirochaetota</taxon>
        <taxon>Spirochaetia</taxon>
        <taxon>Spirochaetales</taxon>
        <taxon>Borreliaceae</taxon>
        <taxon>Borrelia</taxon>
    </lineage>
</organism>
<name>RUVA_BORT9</name>
<feature type="chain" id="PRO_1000195122" description="Holliday junction branch migration complex subunit RuvA">
    <location>
        <begin position="1"/>
        <end position="196"/>
    </location>
</feature>
<feature type="region of interest" description="Domain I" evidence="1">
    <location>
        <begin position="1"/>
        <end position="63"/>
    </location>
</feature>
<feature type="region of interest" description="Domain II" evidence="1">
    <location>
        <begin position="64"/>
        <end position="135"/>
    </location>
</feature>
<feature type="region of interest" description="Flexible linker" evidence="1">
    <location>
        <begin position="135"/>
        <end position="138"/>
    </location>
</feature>
<feature type="region of interest" description="Domain III" evidence="1">
    <location>
        <begin position="139"/>
        <end position="196"/>
    </location>
</feature>
<comment type="function">
    <text evidence="1">The RuvA-RuvB-RuvC complex processes Holliday junction (HJ) DNA during genetic recombination and DNA repair, while the RuvA-RuvB complex plays an important role in the rescue of blocked DNA replication forks via replication fork reversal (RFR). RuvA specifically binds to HJ cruciform DNA, conferring on it an open structure. The RuvB hexamer acts as an ATP-dependent pump, pulling dsDNA into and through the RuvAB complex. HJ branch migration allows RuvC to scan DNA until it finds its consensus sequence, where it cleaves and resolves the cruciform DNA.</text>
</comment>
<comment type="subunit">
    <text evidence="1">Homotetramer. Forms an RuvA(8)-RuvB(12)-Holliday junction (HJ) complex. HJ DNA is sandwiched between 2 RuvA tetramers; dsDNA enters through RuvA and exits via RuvB. An RuvB hexamer assembles on each DNA strand where it exits the tetramer. Each RuvB hexamer is contacted by two RuvA subunits (via domain III) on 2 adjacent RuvB subunits; this complex drives branch migration. In the full resolvosome a probable DNA-RuvA(4)-RuvB(12)-RuvC(2) complex forms which resolves the HJ.</text>
</comment>
<comment type="subcellular location">
    <subcellularLocation>
        <location evidence="1">Cytoplasm</location>
    </subcellularLocation>
</comment>
<comment type="domain">
    <text evidence="1">Has three domains with a flexible linker between the domains II and III and assumes an 'L' shape. Domain III is highly mobile and contacts RuvB.</text>
</comment>
<comment type="similarity">
    <text evidence="1">Belongs to the RuvA family.</text>
</comment>
<sequence>MINKICGKIVEKRESSIVIVALPFEFEILVSSFCNAELGLQEDVEILTYLHLREDEIRLFGFLNVSEREVFEKLISVDGIGPKAALRILSGIKYNEFRDAVEREDVKLISNVKGIGNKMAGKIFLKLRGKLVKVNEASSGVLKFKELEQSIVNMGFDRKLVAAAIKEIMLIDEFLMLRQVDQEQFLFREILRKLSG</sequence>
<proteinExistence type="inferred from homology"/>
<protein>
    <recommendedName>
        <fullName evidence="1">Holliday junction branch migration complex subunit RuvA</fullName>
    </recommendedName>
</protein>
<dbReference type="EMBL" id="CP000049">
    <property type="protein sequence ID" value="AAX17368.1"/>
    <property type="molecule type" value="Genomic_DNA"/>
</dbReference>
<dbReference type="RefSeq" id="WP_011771987.1">
    <property type="nucleotide sequence ID" value="NC_008710.1"/>
</dbReference>
<dbReference type="SMR" id="A1QYH6"/>
<dbReference type="KEGG" id="btu:BT0023"/>
<dbReference type="eggNOG" id="COG0632">
    <property type="taxonomic scope" value="Bacteria"/>
</dbReference>
<dbReference type="HOGENOM" id="CLU_087936_2_0_12"/>
<dbReference type="Proteomes" id="UP000001205">
    <property type="component" value="Chromosome"/>
</dbReference>
<dbReference type="GO" id="GO:0005737">
    <property type="term" value="C:cytoplasm"/>
    <property type="evidence" value="ECO:0007669"/>
    <property type="project" value="UniProtKB-SubCell"/>
</dbReference>
<dbReference type="GO" id="GO:0048476">
    <property type="term" value="C:Holliday junction resolvase complex"/>
    <property type="evidence" value="ECO:0007669"/>
    <property type="project" value="UniProtKB-UniRule"/>
</dbReference>
<dbReference type="GO" id="GO:0005524">
    <property type="term" value="F:ATP binding"/>
    <property type="evidence" value="ECO:0007669"/>
    <property type="project" value="InterPro"/>
</dbReference>
<dbReference type="GO" id="GO:0000400">
    <property type="term" value="F:four-way junction DNA binding"/>
    <property type="evidence" value="ECO:0007669"/>
    <property type="project" value="UniProtKB-UniRule"/>
</dbReference>
<dbReference type="GO" id="GO:0009378">
    <property type="term" value="F:four-way junction helicase activity"/>
    <property type="evidence" value="ECO:0007669"/>
    <property type="project" value="InterPro"/>
</dbReference>
<dbReference type="GO" id="GO:0006310">
    <property type="term" value="P:DNA recombination"/>
    <property type="evidence" value="ECO:0007669"/>
    <property type="project" value="UniProtKB-UniRule"/>
</dbReference>
<dbReference type="GO" id="GO:0006281">
    <property type="term" value="P:DNA repair"/>
    <property type="evidence" value="ECO:0007669"/>
    <property type="project" value="UniProtKB-UniRule"/>
</dbReference>
<dbReference type="Gene3D" id="1.10.150.20">
    <property type="entry name" value="5' to 3' exonuclease, C-terminal subdomain"/>
    <property type="match status" value="1"/>
</dbReference>
<dbReference type="Gene3D" id="2.40.50.140">
    <property type="entry name" value="Nucleic acid-binding proteins"/>
    <property type="match status" value="1"/>
</dbReference>
<dbReference type="HAMAP" id="MF_00031">
    <property type="entry name" value="DNA_HJ_migration_RuvA"/>
    <property type="match status" value="1"/>
</dbReference>
<dbReference type="InterPro" id="IPR013849">
    <property type="entry name" value="DNA_helicase_Holl-junc_RuvA_I"/>
</dbReference>
<dbReference type="InterPro" id="IPR003583">
    <property type="entry name" value="Hlx-hairpin-Hlx_DNA-bd_motif"/>
</dbReference>
<dbReference type="InterPro" id="IPR012340">
    <property type="entry name" value="NA-bd_OB-fold"/>
</dbReference>
<dbReference type="InterPro" id="IPR000085">
    <property type="entry name" value="RuvA"/>
</dbReference>
<dbReference type="InterPro" id="IPR010994">
    <property type="entry name" value="RuvA_2-like"/>
</dbReference>
<dbReference type="NCBIfam" id="TIGR00084">
    <property type="entry name" value="ruvA"/>
    <property type="match status" value="1"/>
</dbReference>
<dbReference type="Pfam" id="PF14520">
    <property type="entry name" value="HHH_5"/>
    <property type="match status" value="1"/>
</dbReference>
<dbReference type="Pfam" id="PF01330">
    <property type="entry name" value="RuvA_N"/>
    <property type="match status" value="1"/>
</dbReference>
<dbReference type="SMART" id="SM00278">
    <property type="entry name" value="HhH1"/>
    <property type="match status" value="2"/>
</dbReference>
<dbReference type="SUPFAM" id="SSF50249">
    <property type="entry name" value="Nucleic acid-binding proteins"/>
    <property type="match status" value="1"/>
</dbReference>
<dbReference type="SUPFAM" id="SSF47781">
    <property type="entry name" value="RuvA domain 2-like"/>
    <property type="match status" value="1"/>
</dbReference>
<accession>A1QYH6</accession>